<reference key="1">
    <citation type="journal article" date="2005" name="Genome Res.">
        <title>Comparative genome sequencing of Drosophila pseudoobscura: chromosomal, gene, and cis-element evolution.</title>
        <authorList>
            <person name="Richards S."/>
            <person name="Liu Y."/>
            <person name="Bettencourt B.R."/>
            <person name="Hradecky P."/>
            <person name="Letovsky S."/>
            <person name="Nielsen R."/>
            <person name="Thornton K."/>
            <person name="Hubisz M.J."/>
            <person name="Chen R."/>
            <person name="Meisel R.P."/>
            <person name="Couronne O."/>
            <person name="Hua S."/>
            <person name="Smith M.A."/>
            <person name="Zhang P."/>
            <person name="Liu J."/>
            <person name="Bussemaker H.J."/>
            <person name="van Batenburg M.F."/>
            <person name="Howells S.L."/>
            <person name="Scherer S.E."/>
            <person name="Sodergren E."/>
            <person name="Matthews B.B."/>
            <person name="Crosby M.A."/>
            <person name="Schroeder A.J."/>
            <person name="Ortiz-Barrientos D."/>
            <person name="Rives C.M."/>
            <person name="Metzker M.L."/>
            <person name="Muzny D.M."/>
            <person name="Scott G."/>
            <person name="Steffen D."/>
            <person name="Wheeler D.A."/>
            <person name="Worley K.C."/>
            <person name="Havlak P."/>
            <person name="Durbin K.J."/>
            <person name="Egan A."/>
            <person name="Gill R."/>
            <person name="Hume J."/>
            <person name="Morgan M.B."/>
            <person name="Miner G."/>
            <person name="Hamilton C."/>
            <person name="Huang Y."/>
            <person name="Waldron L."/>
            <person name="Verduzco D."/>
            <person name="Clerc-Blankenburg K.P."/>
            <person name="Dubchak I."/>
            <person name="Noor M.A.F."/>
            <person name="Anderson W."/>
            <person name="White K.P."/>
            <person name="Clark A.G."/>
            <person name="Schaeffer S.W."/>
            <person name="Gelbart W.M."/>
            <person name="Weinstock G.M."/>
            <person name="Gibbs R.A."/>
        </authorList>
    </citation>
    <scope>NUCLEOTIDE SEQUENCE [LARGE SCALE GENOMIC DNA]</scope>
    <source>
        <strain>MV2-25 / Tucson 14011-0121.94</strain>
    </source>
</reference>
<reference key="2">
    <citation type="journal article" date="1987" name="EMBO J.">
        <title>Conserved sequence elements in the 5' region of the Ultrabithorax transcription unit.</title>
        <authorList>
            <person name="Wilde C.D."/>
            <person name="Akam M."/>
        </authorList>
    </citation>
    <scope>NUCLEOTIDE SEQUENCE [GENOMIC DNA] OF 1-259</scope>
    <scope>ALTERNATIVE SPLICING (ISOFORMS IA AND IB)</scope>
</reference>
<reference key="3">
    <citation type="journal article" date="1994" name="Genetics">
        <title>Evolutionary conservation of the structure and expression of alternatively spliced Ultrabithorax isoforms from Drosophila.</title>
        <authorList>
            <person name="Bomze H.M."/>
            <person name="Lopez A.J."/>
        </authorList>
    </citation>
    <scope>NUCLEOTIDE SEQUENCE [MRNA] OF 222-298 (ISOFORM IA)</scope>
</reference>
<organism>
    <name type="scientific">Drosophila pseudoobscura pseudoobscura</name>
    <name type="common">Fruit fly</name>
    <dbReference type="NCBI Taxonomy" id="46245"/>
    <lineage>
        <taxon>Eukaryota</taxon>
        <taxon>Metazoa</taxon>
        <taxon>Ecdysozoa</taxon>
        <taxon>Arthropoda</taxon>
        <taxon>Hexapoda</taxon>
        <taxon>Insecta</taxon>
        <taxon>Pterygota</taxon>
        <taxon>Neoptera</taxon>
        <taxon>Endopterygota</taxon>
        <taxon>Diptera</taxon>
        <taxon>Brachycera</taxon>
        <taxon>Muscomorpha</taxon>
        <taxon>Ephydroidea</taxon>
        <taxon>Drosophilidae</taxon>
        <taxon>Drosophila</taxon>
        <taxon>Sophophora</taxon>
    </lineage>
</organism>
<dbReference type="EMBL" id="CM000070">
    <property type="protein sequence ID" value="EAL28209.2"/>
    <property type="molecule type" value="Genomic_DNA"/>
</dbReference>
<dbReference type="EMBL" id="X05179">
    <property type="protein sequence ID" value="CAA28814.1"/>
    <property type="molecule type" value="Genomic_DNA"/>
</dbReference>
<dbReference type="EMBL" id="X05179">
    <property type="protein sequence ID" value="CAA28815.1"/>
    <property type="molecule type" value="Genomic_DNA"/>
</dbReference>
<dbReference type="EMBL" id="U03179">
    <property type="protein sequence ID" value="AAA03569.1"/>
    <property type="molecule type" value="mRNA"/>
</dbReference>
<dbReference type="PIR" id="A29259">
    <property type="entry name" value="A29259"/>
</dbReference>
<dbReference type="RefSeq" id="XP_001359066.2">
    <property type="nucleotide sequence ID" value="XM_001359029.3"/>
</dbReference>
<dbReference type="SMR" id="P20822"/>
<dbReference type="FunCoup" id="P20822">
    <property type="interactions" value="26"/>
</dbReference>
<dbReference type="STRING" id="46245.P20822"/>
<dbReference type="EnsemblMetazoa" id="FBtr0283358">
    <molecule id="P20822-1"/>
    <property type="protein sequence ID" value="FBpp0281796"/>
    <property type="gene ID" value="FBgn0243536"/>
</dbReference>
<dbReference type="GeneID" id="4802074"/>
<dbReference type="KEGG" id="dpo:4802074"/>
<dbReference type="CTD" id="42034"/>
<dbReference type="eggNOG" id="KOG0489">
    <property type="taxonomic scope" value="Eukaryota"/>
</dbReference>
<dbReference type="InParanoid" id="P20822"/>
<dbReference type="OMA" id="PDWIGAN"/>
<dbReference type="ChiTaRS" id="Ubx">
    <property type="organism name" value="fly"/>
</dbReference>
<dbReference type="Proteomes" id="UP000001819">
    <property type="component" value="Chromosome 2"/>
</dbReference>
<dbReference type="Bgee" id="FBgn0243536">
    <property type="expression patterns" value="Expressed in multicellular organism and 1 other cell type or tissue"/>
</dbReference>
<dbReference type="ExpressionAtlas" id="P20822">
    <property type="expression patterns" value="baseline"/>
</dbReference>
<dbReference type="GO" id="GO:0005634">
    <property type="term" value="C:nucleus"/>
    <property type="evidence" value="ECO:0007669"/>
    <property type="project" value="UniProtKB-SubCell"/>
</dbReference>
<dbReference type="GO" id="GO:0003677">
    <property type="term" value="F:DNA binding"/>
    <property type="evidence" value="ECO:0000304"/>
    <property type="project" value="UniProtKB"/>
</dbReference>
<dbReference type="GO" id="GO:0000981">
    <property type="term" value="F:DNA-binding transcription factor activity, RNA polymerase II-specific"/>
    <property type="evidence" value="ECO:0007669"/>
    <property type="project" value="InterPro"/>
</dbReference>
<dbReference type="GO" id="GO:0000978">
    <property type="term" value="F:RNA polymerase II cis-regulatory region sequence-specific DNA binding"/>
    <property type="evidence" value="ECO:0007669"/>
    <property type="project" value="TreeGrafter"/>
</dbReference>
<dbReference type="GO" id="GO:0009952">
    <property type="term" value="P:anterior/posterior pattern specification"/>
    <property type="evidence" value="ECO:0007669"/>
    <property type="project" value="TreeGrafter"/>
</dbReference>
<dbReference type="GO" id="GO:0000122">
    <property type="term" value="P:negative regulation of transcription by RNA polymerase II"/>
    <property type="evidence" value="ECO:0007669"/>
    <property type="project" value="TreeGrafter"/>
</dbReference>
<dbReference type="CDD" id="cd00086">
    <property type="entry name" value="homeodomain"/>
    <property type="match status" value="1"/>
</dbReference>
<dbReference type="Gene3D" id="1.10.10.60">
    <property type="entry name" value="Homeodomain-like"/>
    <property type="match status" value="1"/>
</dbReference>
<dbReference type="InterPro" id="IPR050296">
    <property type="entry name" value="Antp_homeobox"/>
</dbReference>
<dbReference type="InterPro" id="IPR001356">
    <property type="entry name" value="HD"/>
</dbReference>
<dbReference type="InterPro" id="IPR020479">
    <property type="entry name" value="HD_metazoa"/>
</dbReference>
<dbReference type="InterPro" id="IPR017970">
    <property type="entry name" value="Homeobox_CS"/>
</dbReference>
<dbReference type="InterPro" id="IPR009057">
    <property type="entry name" value="Homeodomain-like_sf"/>
</dbReference>
<dbReference type="PANTHER" id="PTHR45659">
    <property type="entry name" value="HOMEOBOX PROTEIN HOX"/>
    <property type="match status" value="1"/>
</dbReference>
<dbReference type="PANTHER" id="PTHR45659:SF21">
    <property type="entry name" value="HOMEOTIC PROTEIN ULTRABITHORAX"/>
    <property type="match status" value="1"/>
</dbReference>
<dbReference type="Pfam" id="PF00046">
    <property type="entry name" value="Homeodomain"/>
    <property type="match status" value="1"/>
</dbReference>
<dbReference type="PRINTS" id="PR00024">
    <property type="entry name" value="HOMEOBOX"/>
</dbReference>
<dbReference type="SMART" id="SM00389">
    <property type="entry name" value="HOX"/>
    <property type="match status" value="1"/>
</dbReference>
<dbReference type="SUPFAM" id="SSF46689">
    <property type="entry name" value="Homeodomain-like"/>
    <property type="match status" value="1"/>
</dbReference>
<dbReference type="PROSITE" id="PS00032">
    <property type="entry name" value="ANTENNAPEDIA"/>
    <property type="match status" value="1"/>
</dbReference>
<dbReference type="PROSITE" id="PS00027">
    <property type="entry name" value="HOMEOBOX_1"/>
    <property type="match status" value="1"/>
</dbReference>
<dbReference type="PROSITE" id="PS50071">
    <property type="entry name" value="HOMEOBOX_2"/>
    <property type="match status" value="1"/>
</dbReference>
<keyword id="KW-0010">Activator</keyword>
<keyword id="KW-0025">Alternative splicing</keyword>
<keyword id="KW-0217">Developmental protein</keyword>
<keyword id="KW-0238">DNA-binding</keyword>
<keyword id="KW-0371">Homeobox</keyword>
<keyword id="KW-0539">Nucleus</keyword>
<keyword id="KW-1185">Reference proteome</keyword>
<keyword id="KW-0678">Repressor</keyword>
<keyword id="KW-0804">Transcription</keyword>
<keyword id="KW-0805">Transcription regulation</keyword>
<protein>
    <recommendedName>
        <fullName>Homeotic protein ultrabithorax</fullName>
    </recommendedName>
</protein>
<accession>P20822</accession>
<accession>Q23833</accession>
<accession>Q297J6</accession>
<sequence>MNSYFEQASGFYGHPHQATGMAMGSGGHHDQTASAAAAAYRGFPLSLGMSPYANHHLQRTTQDSPYDASITAACNKIYGDGASAYKQDCLNIKADAVNGYKDIWNTGGSNGGGTGGGGGGGGAGGNASNGSNAGNAANGQNNAAGGMPVRPSACTPDSRVGGYLDTSGGSPVSHRGGSAGGNVSAGGGGQSGQSGAPGVGVGVGVGVGAGAGTAWNANCTISGAAAAQTAAASSLHQASNHTFYPWMAIAGKIRSDLTQYGGISTDMGKRYSESLAGSLLPDWLGTNGLRRRGRQTYTRYQTLELEKEFHTNHYLTRRRRIEMAHALCLTERQIKIWFQNRRMKLKKEIQAIKELNEQEKQAQAQKAAAAAAAAAAVQGGHLDQN</sequence>
<proteinExistence type="evidence at transcript level"/>
<name>UBX_DROPS</name>
<gene>
    <name type="primary">Ubx</name>
    <name type="ORF">GA10294</name>
</gene>
<comment type="function">
    <text evidence="1">Sequence-specific transcription factor which is part of a developmental regulatory system that provides cells with specific positional identities on the anterior-posterior axis. Binds the consensus region 5'-TTAAT[GT][GA]-3'. This homeotic protein controls development of the cells in the posterior thoracic and first abdominal segments. It activates the synthesis of the decapentaplegic (DPP) growth factor (By similarity).</text>
</comment>
<comment type="subcellular location">
    <subcellularLocation>
        <location>Nucleus</location>
    </subcellularLocation>
</comment>
<comment type="alternative products">
    <event type="alternative splicing"/>
    <isoform>
        <id>P20822-1</id>
        <name>Ia</name>
        <name>Major</name>
        <sequence type="displayed"/>
    </isoform>
    <isoform>
        <id>P20822-2</id>
        <name>Ib</name>
        <name>Minor</name>
        <sequence type="described" ref="VSP_036065"/>
    </isoform>
</comment>
<comment type="similarity">
    <text evidence="4">Belongs to the Antp homeobox family.</text>
</comment>
<feature type="chain" id="PRO_0000200269" description="Homeotic protein ultrabithorax">
    <location>
        <begin position="1"/>
        <end position="385"/>
    </location>
</feature>
<feature type="DNA-binding region" description="Homeobox" evidence="2">
    <location>
        <begin position="290"/>
        <end position="349"/>
    </location>
</feature>
<feature type="region of interest" description="Disordered" evidence="3">
    <location>
        <begin position="132"/>
        <end position="194"/>
    </location>
</feature>
<feature type="short sequence motif" description="Antp-type hexapeptide">
    <location>
        <begin position="243"/>
        <end position="248"/>
    </location>
</feature>
<feature type="compositionally biased region" description="Low complexity" evidence="3">
    <location>
        <begin position="132"/>
        <end position="146"/>
    </location>
</feature>
<feature type="compositionally biased region" description="Gly residues" evidence="3">
    <location>
        <begin position="177"/>
        <end position="194"/>
    </location>
</feature>
<feature type="splice variant" id="VSP_036065" description="In isoform Ib." evidence="4">
    <original>KIRSDLTQ</original>
    <variation>ECPEDPTK</variation>
    <location>
        <begin position="252"/>
        <end position="259"/>
    </location>
</feature>
<feature type="sequence conflict" description="In Ref. 2; CAA28814/CAA28815." evidence="4" ref="2">
    <location>
        <position position="123"/>
    </location>
</feature>
<evidence type="ECO:0000250" key="1"/>
<evidence type="ECO:0000255" key="2">
    <source>
        <dbReference type="PROSITE-ProRule" id="PRU00108"/>
    </source>
</evidence>
<evidence type="ECO:0000256" key="3">
    <source>
        <dbReference type="SAM" id="MobiDB-lite"/>
    </source>
</evidence>
<evidence type="ECO:0000305" key="4"/>